<gene>
    <name evidence="1" type="primary">rplR</name>
    <name type="ordered locus">BVU_0789</name>
</gene>
<proteinExistence type="inferred from homology"/>
<keyword id="KW-0687">Ribonucleoprotein</keyword>
<keyword id="KW-0689">Ribosomal protein</keyword>
<keyword id="KW-0694">RNA-binding</keyword>
<keyword id="KW-0699">rRNA-binding</keyword>
<sequence>MTTKLERRIKIKYRVRNKISGTTERPRMSVFRSNKQIYVQVIDDLSGRTLAAASSLGMEAMPKKEQAAKVGELIAKKAQEAGITTVVFDRNGYLYHGRIKEVADAARNGGLKF</sequence>
<protein>
    <recommendedName>
        <fullName evidence="1">Large ribosomal subunit protein uL18</fullName>
    </recommendedName>
    <alternativeName>
        <fullName evidence="2">50S ribosomal protein L18</fullName>
    </alternativeName>
</protein>
<evidence type="ECO:0000255" key="1">
    <source>
        <dbReference type="HAMAP-Rule" id="MF_01337"/>
    </source>
</evidence>
<evidence type="ECO:0000305" key="2"/>
<name>RL18_PHOV8</name>
<accession>A6KYH9</accession>
<comment type="function">
    <text evidence="1">This is one of the proteins that bind and probably mediate the attachment of the 5S RNA into the large ribosomal subunit, where it forms part of the central protuberance.</text>
</comment>
<comment type="subunit">
    <text evidence="1">Part of the 50S ribosomal subunit; part of the 5S rRNA/L5/L18/L25 subcomplex. Contacts the 5S and 23S rRNAs.</text>
</comment>
<comment type="similarity">
    <text evidence="1">Belongs to the universal ribosomal protein uL18 family.</text>
</comment>
<dbReference type="EMBL" id="CP000139">
    <property type="protein sequence ID" value="ABR38493.1"/>
    <property type="molecule type" value="Genomic_DNA"/>
</dbReference>
<dbReference type="RefSeq" id="WP_005844882.1">
    <property type="nucleotide sequence ID" value="NZ_JANSWM010000035.1"/>
</dbReference>
<dbReference type="SMR" id="A6KYH9"/>
<dbReference type="STRING" id="435590.BVU_0789"/>
<dbReference type="PaxDb" id="435590-BVU_0789"/>
<dbReference type="GeneID" id="93449007"/>
<dbReference type="KEGG" id="bvu:BVU_0789"/>
<dbReference type="eggNOG" id="COG0256">
    <property type="taxonomic scope" value="Bacteria"/>
</dbReference>
<dbReference type="HOGENOM" id="CLU_098841_0_1_10"/>
<dbReference type="BioCyc" id="BVUL435590:G1G59-831-MONOMER"/>
<dbReference type="Proteomes" id="UP000002861">
    <property type="component" value="Chromosome"/>
</dbReference>
<dbReference type="GO" id="GO:0022625">
    <property type="term" value="C:cytosolic large ribosomal subunit"/>
    <property type="evidence" value="ECO:0007669"/>
    <property type="project" value="TreeGrafter"/>
</dbReference>
<dbReference type="GO" id="GO:0008097">
    <property type="term" value="F:5S rRNA binding"/>
    <property type="evidence" value="ECO:0007669"/>
    <property type="project" value="TreeGrafter"/>
</dbReference>
<dbReference type="GO" id="GO:0003735">
    <property type="term" value="F:structural constituent of ribosome"/>
    <property type="evidence" value="ECO:0007669"/>
    <property type="project" value="InterPro"/>
</dbReference>
<dbReference type="GO" id="GO:0006412">
    <property type="term" value="P:translation"/>
    <property type="evidence" value="ECO:0007669"/>
    <property type="project" value="UniProtKB-UniRule"/>
</dbReference>
<dbReference type="CDD" id="cd00432">
    <property type="entry name" value="Ribosomal_L18_L5e"/>
    <property type="match status" value="1"/>
</dbReference>
<dbReference type="FunFam" id="3.30.420.100:FF:000003">
    <property type="entry name" value="50S ribosomal protein L18"/>
    <property type="match status" value="1"/>
</dbReference>
<dbReference type="Gene3D" id="3.30.420.100">
    <property type="match status" value="1"/>
</dbReference>
<dbReference type="HAMAP" id="MF_01337_B">
    <property type="entry name" value="Ribosomal_uL18_B"/>
    <property type="match status" value="1"/>
</dbReference>
<dbReference type="InterPro" id="IPR004389">
    <property type="entry name" value="Ribosomal_uL18_bac-type"/>
</dbReference>
<dbReference type="InterPro" id="IPR005484">
    <property type="entry name" value="Ribosomal_uL18_bac/euk"/>
</dbReference>
<dbReference type="NCBIfam" id="TIGR00060">
    <property type="entry name" value="L18_bact"/>
    <property type="match status" value="1"/>
</dbReference>
<dbReference type="PANTHER" id="PTHR12899">
    <property type="entry name" value="39S RIBOSOMAL PROTEIN L18, MITOCHONDRIAL"/>
    <property type="match status" value="1"/>
</dbReference>
<dbReference type="PANTHER" id="PTHR12899:SF3">
    <property type="entry name" value="LARGE RIBOSOMAL SUBUNIT PROTEIN UL18M"/>
    <property type="match status" value="1"/>
</dbReference>
<dbReference type="Pfam" id="PF00861">
    <property type="entry name" value="Ribosomal_L18p"/>
    <property type="match status" value="1"/>
</dbReference>
<dbReference type="SUPFAM" id="SSF53137">
    <property type="entry name" value="Translational machinery components"/>
    <property type="match status" value="1"/>
</dbReference>
<organism>
    <name type="scientific">Phocaeicola vulgatus (strain ATCC 8482 / DSM 1447 / JCM 5826 / CCUG 4940 / NBRC 14291 / NCTC 11154)</name>
    <name type="common">Bacteroides vulgatus</name>
    <dbReference type="NCBI Taxonomy" id="435590"/>
    <lineage>
        <taxon>Bacteria</taxon>
        <taxon>Pseudomonadati</taxon>
        <taxon>Bacteroidota</taxon>
        <taxon>Bacteroidia</taxon>
        <taxon>Bacteroidales</taxon>
        <taxon>Bacteroidaceae</taxon>
        <taxon>Phocaeicola</taxon>
    </lineage>
</organism>
<reference key="1">
    <citation type="journal article" date="2007" name="PLoS Biol.">
        <title>Evolution of symbiotic bacteria in the distal human intestine.</title>
        <authorList>
            <person name="Xu J."/>
            <person name="Mahowald M.A."/>
            <person name="Ley R.E."/>
            <person name="Lozupone C.A."/>
            <person name="Hamady M."/>
            <person name="Martens E.C."/>
            <person name="Henrissat B."/>
            <person name="Coutinho P.M."/>
            <person name="Minx P."/>
            <person name="Latreille P."/>
            <person name="Cordum H."/>
            <person name="Van Brunt A."/>
            <person name="Kim K."/>
            <person name="Fulton R.S."/>
            <person name="Fulton L.A."/>
            <person name="Clifton S.W."/>
            <person name="Wilson R.K."/>
            <person name="Knight R.D."/>
            <person name="Gordon J.I."/>
        </authorList>
    </citation>
    <scope>NUCLEOTIDE SEQUENCE [LARGE SCALE GENOMIC DNA]</scope>
    <source>
        <strain>ATCC 8482 / DSM 1447 / JCM 5826 / CCUG 4940 / NBRC 14291 / NCTC 11154</strain>
    </source>
</reference>
<feature type="chain" id="PRO_1000052988" description="Large ribosomal subunit protein uL18">
    <location>
        <begin position="1"/>
        <end position="113"/>
    </location>
</feature>